<comment type="function">
    <text evidence="1">NDH-1 shuttles electrons from NADH, via FMN and iron-sulfur (Fe-S) centers, to quinones in the respiratory chain. The immediate electron acceptor for the enzyme in this species is believed to be ubiquinone. Couples the redox reaction to proton translocation (for every two electrons transferred, four hydrogen ions are translocated across the cytoplasmic membrane), and thus conserves the redox energy in a proton gradient.</text>
</comment>
<comment type="catalytic activity">
    <reaction evidence="1">
        <text>a quinone + NADH + 5 H(+)(in) = a quinol + NAD(+) + 4 H(+)(out)</text>
        <dbReference type="Rhea" id="RHEA:57888"/>
        <dbReference type="ChEBI" id="CHEBI:15378"/>
        <dbReference type="ChEBI" id="CHEBI:24646"/>
        <dbReference type="ChEBI" id="CHEBI:57540"/>
        <dbReference type="ChEBI" id="CHEBI:57945"/>
        <dbReference type="ChEBI" id="CHEBI:132124"/>
    </reaction>
</comment>
<comment type="subunit">
    <text evidence="1">NDH-1 is composed of 14 different subunits. Subunits NuoB, C, D, E, F, and G constitute the peripheral sector of the complex.</text>
</comment>
<comment type="subcellular location">
    <subcellularLocation>
        <location evidence="1">Cell membrane</location>
        <topology evidence="1">Peripheral membrane protein</topology>
        <orientation evidence="1">Cytoplasmic side</orientation>
    </subcellularLocation>
</comment>
<comment type="similarity">
    <text evidence="1">Belongs to the complex I 49 kDa subunit family.</text>
</comment>
<dbReference type="EC" id="7.1.1.-" evidence="1"/>
<dbReference type="EMBL" id="CP000875">
    <property type="protein sequence ID" value="ABX05720.1"/>
    <property type="molecule type" value="Genomic_DNA"/>
</dbReference>
<dbReference type="SMR" id="A9B4Z7"/>
<dbReference type="STRING" id="316274.Haur_3082"/>
<dbReference type="KEGG" id="hau:Haur_3082"/>
<dbReference type="eggNOG" id="COG0649">
    <property type="taxonomic scope" value="Bacteria"/>
</dbReference>
<dbReference type="HOGENOM" id="CLU_015134_1_2_0"/>
<dbReference type="InParanoid" id="A9B4Z7"/>
<dbReference type="Proteomes" id="UP000000787">
    <property type="component" value="Chromosome"/>
</dbReference>
<dbReference type="GO" id="GO:0005886">
    <property type="term" value="C:plasma membrane"/>
    <property type="evidence" value="ECO:0007669"/>
    <property type="project" value="UniProtKB-SubCell"/>
</dbReference>
<dbReference type="GO" id="GO:0051287">
    <property type="term" value="F:NAD binding"/>
    <property type="evidence" value="ECO:0007669"/>
    <property type="project" value="InterPro"/>
</dbReference>
<dbReference type="GO" id="GO:0050136">
    <property type="term" value="F:NADH:ubiquinone reductase (non-electrogenic) activity"/>
    <property type="evidence" value="ECO:0007669"/>
    <property type="project" value="UniProtKB-UniRule"/>
</dbReference>
<dbReference type="GO" id="GO:0048038">
    <property type="term" value="F:quinone binding"/>
    <property type="evidence" value="ECO:0007669"/>
    <property type="project" value="UniProtKB-KW"/>
</dbReference>
<dbReference type="Gene3D" id="1.10.645.10">
    <property type="entry name" value="Cytochrome-c3 Hydrogenase, chain B"/>
    <property type="match status" value="1"/>
</dbReference>
<dbReference type="HAMAP" id="MF_01358">
    <property type="entry name" value="NDH1_NuoD"/>
    <property type="match status" value="1"/>
</dbReference>
<dbReference type="InterPro" id="IPR001135">
    <property type="entry name" value="NADH_Q_OxRdtase_suD"/>
</dbReference>
<dbReference type="InterPro" id="IPR014029">
    <property type="entry name" value="NADH_UbQ_OxRdtase_49kDa_CS"/>
</dbReference>
<dbReference type="InterPro" id="IPR022885">
    <property type="entry name" value="NDH1_su_D/H"/>
</dbReference>
<dbReference type="InterPro" id="IPR029014">
    <property type="entry name" value="NiFe-Hase_large"/>
</dbReference>
<dbReference type="NCBIfam" id="TIGR01962">
    <property type="entry name" value="NuoD"/>
    <property type="match status" value="1"/>
</dbReference>
<dbReference type="NCBIfam" id="NF004739">
    <property type="entry name" value="PRK06075.1"/>
    <property type="match status" value="1"/>
</dbReference>
<dbReference type="PANTHER" id="PTHR11993:SF10">
    <property type="entry name" value="NADH DEHYDROGENASE [UBIQUINONE] IRON-SULFUR PROTEIN 2, MITOCHONDRIAL"/>
    <property type="match status" value="1"/>
</dbReference>
<dbReference type="PANTHER" id="PTHR11993">
    <property type="entry name" value="NADH-UBIQUINONE OXIDOREDUCTASE 49 KDA SUBUNIT"/>
    <property type="match status" value="1"/>
</dbReference>
<dbReference type="Pfam" id="PF00346">
    <property type="entry name" value="Complex1_49kDa"/>
    <property type="match status" value="1"/>
</dbReference>
<dbReference type="SUPFAM" id="SSF56762">
    <property type="entry name" value="HydB/Nqo4-like"/>
    <property type="match status" value="1"/>
</dbReference>
<dbReference type="PROSITE" id="PS00535">
    <property type="entry name" value="COMPLEX1_49K"/>
    <property type="match status" value="1"/>
</dbReference>
<sequence length="422" mass="47415">MVMHAHAYPDIEIPTPSQIAAVALNNEPDENGEQSMVLSMGPQHPSTHGVLRLAVELNGENVVQLAPDVGFLHTGIEKTIETKTYTKSIVLTDRMDYLAPMSNNMVYVAAIEKLMQQDVPERAQTLRVLLLELTRINSHLVWLGTHALDLAAMSVFFYAMREREYILDIFEMLTGARMMTSYFRVGGLAWDIPADFIPTVEDFLTHFLPKVDEYEDLLTNNLLWKQRTKGVGVVNAADAIALGLSGANLRASGVDWDLRKTMPYSGYETYQFDVPVGQAGDIYDRYRCRVQEMRESVKIARQAIERVKQMHGQPYVTENRKVAPPPKSEITYSMESLIHHFKLWTEGFRPPRGSAYAAIESPRGEIGCYVVSDGTPKPWRVHFRAPSFINLQALPHIAKGKLMADLVALIASIDPVLGEVDR</sequence>
<name>NUOD1_HERA2</name>
<keyword id="KW-1003">Cell membrane</keyword>
<keyword id="KW-0472">Membrane</keyword>
<keyword id="KW-0520">NAD</keyword>
<keyword id="KW-0874">Quinone</keyword>
<keyword id="KW-1278">Translocase</keyword>
<keyword id="KW-0813">Transport</keyword>
<keyword id="KW-0830">Ubiquinone</keyword>
<evidence type="ECO:0000255" key="1">
    <source>
        <dbReference type="HAMAP-Rule" id="MF_01358"/>
    </source>
</evidence>
<gene>
    <name evidence="1" type="primary">nuoD1</name>
    <name type="ordered locus">Haur_3082</name>
</gene>
<protein>
    <recommendedName>
        <fullName evidence="1">NADH-quinone oxidoreductase subunit D 1</fullName>
        <ecNumber evidence="1">7.1.1.-</ecNumber>
    </recommendedName>
    <alternativeName>
        <fullName evidence="1">NADH dehydrogenase I subunit D 1</fullName>
    </alternativeName>
    <alternativeName>
        <fullName evidence="1">NDH-1 subunit D 1</fullName>
    </alternativeName>
</protein>
<reference key="1">
    <citation type="journal article" date="2011" name="Stand. Genomic Sci.">
        <title>Complete genome sequence of the filamentous gliding predatory bacterium Herpetosiphon aurantiacus type strain (114-95(T)).</title>
        <authorList>
            <person name="Kiss H."/>
            <person name="Nett M."/>
            <person name="Domin N."/>
            <person name="Martin K."/>
            <person name="Maresca J.A."/>
            <person name="Copeland A."/>
            <person name="Lapidus A."/>
            <person name="Lucas S."/>
            <person name="Berry K.W."/>
            <person name="Glavina Del Rio T."/>
            <person name="Dalin E."/>
            <person name="Tice H."/>
            <person name="Pitluck S."/>
            <person name="Richardson P."/>
            <person name="Bruce D."/>
            <person name="Goodwin L."/>
            <person name="Han C."/>
            <person name="Detter J.C."/>
            <person name="Schmutz J."/>
            <person name="Brettin T."/>
            <person name="Land M."/>
            <person name="Hauser L."/>
            <person name="Kyrpides N.C."/>
            <person name="Ivanova N."/>
            <person name="Goeker M."/>
            <person name="Woyke T."/>
            <person name="Klenk H.P."/>
            <person name="Bryant D.A."/>
        </authorList>
    </citation>
    <scope>NUCLEOTIDE SEQUENCE [LARGE SCALE GENOMIC DNA]</scope>
    <source>
        <strain>ATCC 23779 / DSM 785 / 114-95</strain>
    </source>
</reference>
<feature type="chain" id="PRO_0000357830" description="NADH-quinone oxidoreductase subunit D 1">
    <location>
        <begin position="1"/>
        <end position="422"/>
    </location>
</feature>
<accession>A9B4Z7</accession>
<proteinExistence type="inferred from homology"/>
<organism>
    <name type="scientific">Herpetosiphon aurantiacus (strain ATCC 23779 / DSM 785 / 114-95)</name>
    <dbReference type="NCBI Taxonomy" id="316274"/>
    <lineage>
        <taxon>Bacteria</taxon>
        <taxon>Bacillati</taxon>
        <taxon>Chloroflexota</taxon>
        <taxon>Chloroflexia</taxon>
        <taxon>Herpetosiphonales</taxon>
        <taxon>Herpetosiphonaceae</taxon>
        <taxon>Herpetosiphon</taxon>
    </lineage>
</organism>